<sequence>MATSIDLVEAERRYRTICSSWNECITFQQHQAAVEEYKELHQLLFPSSCQYIPGWLTPEQREAKKQAEIAKKLRKLELKEEFKFLIDSALSKSLTKISDQDINDLPWTFMSTLNGLVNPGKFGISNIFAGQKDISVQSKEKFELHVRRALDETFHWCIFPEKLDDFTKTFSEKLSFRLKYS</sequence>
<reference key="1">
    <citation type="journal article" date="2004" name="Science">
        <title>The 1.2-megabase genome sequence of Mimivirus.</title>
        <authorList>
            <person name="Raoult D."/>
            <person name="Audic S."/>
            <person name="Robert C."/>
            <person name="Abergel C."/>
            <person name="Renesto P."/>
            <person name="Ogata H."/>
            <person name="La Scola B."/>
            <person name="Susan M."/>
            <person name="Claverie J.-M."/>
        </authorList>
    </citation>
    <scope>NUCLEOTIDE SEQUENCE [LARGE SCALE GENOMIC DNA]</scope>
    <source>
        <strain>Rowbotham-Bradford</strain>
    </source>
</reference>
<feature type="chain" id="PRO_0000071204" description="Uncharacterized protein L82">
    <location>
        <begin position="1"/>
        <end position="181"/>
    </location>
</feature>
<keyword id="KW-1185">Reference proteome</keyword>
<gene>
    <name type="ordered locus">MIMI_L82</name>
</gene>
<protein>
    <recommendedName>
        <fullName>Uncharacterized protein L82</fullName>
    </recommendedName>
</protein>
<accession>Q5UPG4</accession>
<proteinExistence type="predicted"/>
<name>YL082_MIMIV</name>
<dbReference type="EMBL" id="AY653733">
    <property type="protein sequence ID" value="AAV50357.1"/>
    <property type="molecule type" value="Genomic_DNA"/>
</dbReference>
<dbReference type="SMR" id="Q5UPG4"/>
<dbReference type="KEGG" id="vg:9924679"/>
<dbReference type="Proteomes" id="UP000001134">
    <property type="component" value="Genome"/>
</dbReference>
<organismHost>
    <name type="scientific">Acanthamoeba polyphaga</name>
    <name type="common">Amoeba</name>
    <dbReference type="NCBI Taxonomy" id="5757"/>
</organismHost>
<organism>
    <name type="scientific">Acanthamoeba polyphaga mimivirus</name>
    <name type="common">APMV</name>
    <dbReference type="NCBI Taxonomy" id="212035"/>
    <lineage>
        <taxon>Viruses</taxon>
        <taxon>Varidnaviria</taxon>
        <taxon>Bamfordvirae</taxon>
        <taxon>Nucleocytoviricota</taxon>
        <taxon>Megaviricetes</taxon>
        <taxon>Imitervirales</taxon>
        <taxon>Mimiviridae</taxon>
        <taxon>Megamimivirinae</taxon>
        <taxon>Mimivirus</taxon>
        <taxon>Mimivirus bradfordmassiliense</taxon>
    </lineage>
</organism>